<sequence length="144" mass="16220">MLIPKRVKYRKQHRGRMTGKAKRGNRITFGEYGLQALEPAWITNRQIEAARVAITRSLKRGGKVWIKIFPDKPVTAKPAETRMGGGKGAPEKWVAVVKPGRIMFEVAGVSEELAREAIRLASHKLPIKTRFVKREEMDGEANES</sequence>
<dbReference type="EMBL" id="CP001098">
    <property type="protein sequence ID" value="ACL68885.1"/>
    <property type="molecule type" value="Genomic_DNA"/>
</dbReference>
<dbReference type="RefSeq" id="WP_012635083.1">
    <property type="nucleotide sequence ID" value="NC_011899.1"/>
</dbReference>
<dbReference type="SMR" id="B8D0D1"/>
<dbReference type="STRING" id="373903.Hore_01240"/>
<dbReference type="KEGG" id="hor:Hore_01240"/>
<dbReference type="eggNOG" id="COG0197">
    <property type="taxonomic scope" value="Bacteria"/>
</dbReference>
<dbReference type="HOGENOM" id="CLU_078858_2_1_9"/>
<dbReference type="OrthoDB" id="9802589at2"/>
<dbReference type="Proteomes" id="UP000000719">
    <property type="component" value="Chromosome"/>
</dbReference>
<dbReference type="GO" id="GO:0022625">
    <property type="term" value="C:cytosolic large ribosomal subunit"/>
    <property type="evidence" value="ECO:0007669"/>
    <property type="project" value="TreeGrafter"/>
</dbReference>
<dbReference type="GO" id="GO:0019843">
    <property type="term" value="F:rRNA binding"/>
    <property type="evidence" value="ECO:0007669"/>
    <property type="project" value="UniProtKB-UniRule"/>
</dbReference>
<dbReference type="GO" id="GO:0003735">
    <property type="term" value="F:structural constituent of ribosome"/>
    <property type="evidence" value="ECO:0007669"/>
    <property type="project" value="InterPro"/>
</dbReference>
<dbReference type="GO" id="GO:0000049">
    <property type="term" value="F:tRNA binding"/>
    <property type="evidence" value="ECO:0007669"/>
    <property type="project" value="UniProtKB-KW"/>
</dbReference>
<dbReference type="GO" id="GO:0006412">
    <property type="term" value="P:translation"/>
    <property type="evidence" value="ECO:0007669"/>
    <property type="project" value="UniProtKB-UniRule"/>
</dbReference>
<dbReference type="CDD" id="cd01433">
    <property type="entry name" value="Ribosomal_L16_L10e"/>
    <property type="match status" value="1"/>
</dbReference>
<dbReference type="FunFam" id="3.90.1170.10:FF:000001">
    <property type="entry name" value="50S ribosomal protein L16"/>
    <property type="match status" value="1"/>
</dbReference>
<dbReference type="Gene3D" id="3.90.1170.10">
    <property type="entry name" value="Ribosomal protein L10e/L16"/>
    <property type="match status" value="1"/>
</dbReference>
<dbReference type="HAMAP" id="MF_01342">
    <property type="entry name" value="Ribosomal_uL16"/>
    <property type="match status" value="1"/>
</dbReference>
<dbReference type="InterPro" id="IPR047873">
    <property type="entry name" value="Ribosomal_uL16"/>
</dbReference>
<dbReference type="InterPro" id="IPR000114">
    <property type="entry name" value="Ribosomal_uL16_bact-type"/>
</dbReference>
<dbReference type="InterPro" id="IPR020798">
    <property type="entry name" value="Ribosomal_uL16_CS"/>
</dbReference>
<dbReference type="InterPro" id="IPR016180">
    <property type="entry name" value="Ribosomal_uL16_dom"/>
</dbReference>
<dbReference type="InterPro" id="IPR036920">
    <property type="entry name" value="Ribosomal_uL16_sf"/>
</dbReference>
<dbReference type="NCBIfam" id="TIGR01164">
    <property type="entry name" value="rplP_bact"/>
    <property type="match status" value="1"/>
</dbReference>
<dbReference type="PANTHER" id="PTHR12220">
    <property type="entry name" value="50S/60S RIBOSOMAL PROTEIN L16"/>
    <property type="match status" value="1"/>
</dbReference>
<dbReference type="PANTHER" id="PTHR12220:SF13">
    <property type="entry name" value="LARGE RIBOSOMAL SUBUNIT PROTEIN UL16M"/>
    <property type="match status" value="1"/>
</dbReference>
<dbReference type="Pfam" id="PF00252">
    <property type="entry name" value="Ribosomal_L16"/>
    <property type="match status" value="1"/>
</dbReference>
<dbReference type="PRINTS" id="PR00060">
    <property type="entry name" value="RIBOSOMALL16"/>
</dbReference>
<dbReference type="SUPFAM" id="SSF54686">
    <property type="entry name" value="Ribosomal protein L16p/L10e"/>
    <property type="match status" value="1"/>
</dbReference>
<dbReference type="PROSITE" id="PS00586">
    <property type="entry name" value="RIBOSOMAL_L16_1"/>
    <property type="match status" value="1"/>
</dbReference>
<dbReference type="PROSITE" id="PS00701">
    <property type="entry name" value="RIBOSOMAL_L16_2"/>
    <property type="match status" value="1"/>
</dbReference>
<accession>B8D0D1</accession>
<feature type="chain" id="PRO_1000166362" description="Large ribosomal subunit protein uL16">
    <location>
        <begin position="1"/>
        <end position="144"/>
    </location>
</feature>
<name>RL16_HALOH</name>
<protein>
    <recommendedName>
        <fullName evidence="1">Large ribosomal subunit protein uL16</fullName>
    </recommendedName>
    <alternativeName>
        <fullName evidence="2">50S ribosomal protein L16</fullName>
    </alternativeName>
</protein>
<gene>
    <name evidence="1" type="primary">rplP</name>
    <name type="ordered locus">Hore_01240</name>
</gene>
<organism>
    <name type="scientific">Halothermothrix orenii (strain H 168 / OCM 544 / DSM 9562)</name>
    <dbReference type="NCBI Taxonomy" id="373903"/>
    <lineage>
        <taxon>Bacteria</taxon>
        <taxon>Bacillati</taxon>
        <taxon>Bacillota</taxon>
        <taxon>Clostridia</taxon>
        <taxon>Halanaerobiales</taxon>
        <taxon>Halothermotrichaceae</taxon>
        <taxon>Halothermothrix</taxon>
    </lineage>
</organism>
<proteinExistence type="inferred from homology"/>
<comment type="function">
    <text evidence="1">Binds 23S rRNA and is also seen to make contacts with the A and possibly P site tRNAs.</text>
</comment>
<comment type="subunit">
    <text evidence="1">Part of the 50S ribosomal subunit.</text>
</comment>
<comment type="similarity">
    <text evidence="1">Belongs to the universal ribosomal protein uL16 family.</text>
</comment>
<evidence type="ECO:0000255" key="1">
    <source>
        <dbReference type="HAMAP-Rule" id="MF_01342"/>
    </source>
</evidence>
<evidence type="ECO:0000305" key="2"/>
<keyword id="KW-1185">Reference proteome</keyword>
<keyword id="KW-0687">Ribonucleoprotein</keyword>
<keyword id="KW-0689">Ribosomal protein</keyword>
<keyword id="KW-0694">RNA-binding</keyword>
<keyword id="KW-0699">rRNA-binding</keyword>
<keyword id="KW-0820">tRNA-binding</keyword>
<reference key="1">
    <citation type="journal article" date="2009" name="PLoS ONE">
        <title>Genome analysis of the anaerobic thermohalophilic bacterium Halothermothrix orenii.</title>
        <authorList>
            <person name="Mavromatis K."/>
            <person name="Ivanova N."/>
            <person name="Anderson I."/>
            <person name="Lykidis A."/>
            <person name="Hooper S.D."/>
            <person name="Sun H."/>
            <person name="Kunin V."/>
            <person name="Lapidus A."/>
            <person name="Hugenholtz P."/>
            <person name="Patel B."/>
            <person name="Kyrpides N.C."/>
        </authorList>
    </citation>
    <scope>NUCLEOTIDE SEQUENCE [LARGE SCALE GENOMIC DNA]</scope>
    <source>
        <strain>H 168 / OCM 544 / DSM 9562</strain>
    </source>
</reference>